<gene>
    <name evidence="1" type="primary">rppH</name>
    <name evidence="1" type="synonym">nudH</name>
    <name type="ordered locus">Lcho_0573</name>
</gene>
<evidence type="ECO:0000255" key="1">
    <source>
        <dbReference type="HAMAP-Rule" id="MF_00298"/>
    </source>
</evidence>
<evidence type="ECO:0000256" key="2">
    <source>
        <dbReference type="SAM" id="MobiDB-lite"/>
    </source>
</evidence>
<protein>
    <recommendedName>
        <fullName evidence="1">RNA pyrophosphohydrolase</fullName>
        <ecNumber evidence="1">3.6.1.-</ecNumber>
    </recommendedName>
    <alternativeName>
        <fullName evidence="1">(Di)nucleoside polyphosphate hydrolase</fullName>
    </alternativeName>
</protein>
<name>RPPH_LEPCP</name>
<comment type="function">
    <text evidence="1">Accelerates the degradation of transcripts by removing pyrophosphate from the 5'-end of triphosphorylated RNA, leading to a more labile monophosphorylated state that can stimulate subsequent ribonuclease cleavage.</text>
</comment>
<comment type="cofactor">
    <cofactor evidence="1">
        <name>a divalent metal cation</name>
        <dbReference type="ChEBI" id="CHEBI:60240"/>
    </cofactor>
</comment>
<comment type="similarity">
    <text evidence="1">Belongs to the Nudix hydrolase family. RppH subfamily.</text>
</comment>
<dbReference type="EC" id="3.6.1.-" evidence="1"/>
<dbReference type="EMBL" id="CP001013">
    <property type="protein sequence ID" value="ACB32848.1"/>
    <property type="molecule type" value="Genomic_DNA"/>
</dbReference>
<dbReference type="RefSeq" id="WP_012345610.1">
    <property type="nucleotide sequence ID" value="NC_010524.1"/>
</dbReference>
<dbReference type="SMR" id="B1XYW4"/>
<dbReference type="STRING" id="395495.Lcho_0573"/>
<dbReference type="KEGG" id="lch:Lcho_0573"/>
<dbReference type="eggNOG" id="COG0494">
    <property type="taxonomic scope" value="Bacteria"/>
</dbReference>
<dbReference type="HOGENOM" id="CLU_087195_3_1_4"/>
<dbReference type="OrthoDB" id="9816040at2"/>
<dbReference type="Proteomes" id="UP000001693">
    <property type="component" value="Chromosome"/>
</dbReference>
<dbReference type="GO" id="GO:0005737">
    <property type="term" value="C:cytoplasm"/>
    <property type="evidence" value="ECO:0007669"/>
    <property type="project" value="TreeGrafter"/>
</dbReference>
<dbReference type="GO" id="GO:0034353">
    <property type="term" value="F:mRNA 5'-diphosphatase activity"/>
    <property type="evidence" value="ECO:0007669"/>
    <property type="project" value="TreeGrafter"/>
</dbReference>
<dbReference type="GO" id="GO:0006402">
    <property type="term" value="P:mRNA catabolic process"/>
    <property type="evidence" value="ECO:0007669"/>
    <property type="project" value="TreeGrafter"/>
</dbReference>
<dbReference type="CDD" id="cd03671">
    <property type="entry name" value="NUDIX_Ap4A_hydrolase_plant_like"/>
    <property type="match status" value="1"/>
</dbReference>
<dbReference type="Gene3D" id="3.90.79.10">
    <property type="entry name" value="Nucleoside Triphosphate Pyrophosphohydrolase"/>
    <property type="match status" value="1"/>
</dbReference>
<dbReference type="HAMAP" id="MF_00298">
    <property type="entry name" value="Nudix_RppH"/>
    <property type="match status" value="1"/>
</dbReference>
<dbReference type="InterPro" id="IPR020476">
    <property type="entry name" value="Nudix_hydrolase"/>
</dbReference>
<dbReference type="InterPro" id="IPR015797">
    <property type="entry name" value="NUDIX_hydrolase-like_dom_sf"/>
</dbReference>
<dbReference type="InterPro" id="IPR020084">
    <property type="entry name" value="NUDIX_hydrolase_CS"/>
</dbReference>
<dbReference type="InterPro" id="IPR000086">
    <property type="entry name" value="NUDIX_hydrolase_dom"/>
</dbReference>
<dbReference type="InterPro" id="IPR022927">
    <property type="entry name" value="RppH"/>
</dbReference>
<dbReference type="NCBIfam" id="NF001935">
    <property type="entry name" value="PRK00714.1-2"/>
    <property type="match status" value="1"/>
</dbReference>
<dbReference type="NCBIfam" id="NF001937">
    <property type="entry name" value="PRK00714.1-4"/>
    <property type="match status" value="1"/>
</dbReference>
<dbReference type="NCBIfam" id="NF001938">
    <property type="entry name" value="PRK00714.1-5"/>
    <property type="match status" value="1"/>
</dbReference>
<dbReference type="PANTHER" id="PTHR23114">
    <property type="entry name" value="M7GPPPN-MRNA HYDROLASE"/>
    <property type="match status" value="1"/>
</dbReference>
<dbReference type="PANTHER" id="PTHR23114:SF17">
    <property type="entry name" value="M7GPPPN-MRNA HYDROLASE"/>
    <property type="match status" value="1"/>
</dbReference>
<dbReference type="Pfam" id="PF00293">
    <property type="entry name" value="NUDIX"/>
    <property type="match status" value="1"/>
</dbReference>
<dbReference type="PRINTS" id="PR00502">
    <property type="entry name" value="NUDIXFAMILY"/>
</dbReference>
<dbReference type="SUPFAM" id="SSF55811">
    <property type="entry name" value="Nudix"/>
    <property type="match status" value="1"/>
</dbReference>
<dbReference type="PROSITE" id="PS51462">
    <property type="entry name" value="NUDIX"/>
    <property type="match status" value="1"/>
</dbReference>
<dbReference type="PROSITE" id="PS00893">
    <property type="entry name" value="NUDIX_BOX"/>
    <property type="match status" value="1"/>
</dbReference>
<reference key="1">
    <citation type="submission" date="2008-03" db="EMBL/GenBank/DDBJ databases">
        <title>Complete sequence of Leptothrix cholodnii SP-6.</title>
        <authorList>
            <consortium name="US DOE Joint Genome Institute"/>
            <person name="Copeland A."/>
            <person name="Lucas S."/>
            <person name="Lapidus A."/>
            <person name="Glavina del Rio T."/>
            <person name="Dalin E."/>
            <person name="Tice H."/>
            <person name="Bruce D."/>
            <person name="Goodwin L."/>
            <person name="Pitluck S."/>
            <person name="Chertkov O."/>
            <person name="Brettin T."/>
            <person name="Detter J.C."/>
            <person name="Han C."/>
            <person name="Kuske C.R."/>
            <person name="Schmutz J."/>
            <person name="Larimer F."/>
            <person name="Land M."/>
            <person name="Hauser L."/>
            <person name="Kyrpides N."/>
            <person name="Lykidis A."/>
            <person name="Emerson D."/>
            <person name="Richardson P."/>
        </authorList>
    </citation>
    <scope>NUCLEOTIDE SEQUENCE [LARGE SCALE GENOMIC DNA]</scope>
    <source>
        <strain>ATCC 51168 / LMG 8142 / SP-6</strain>
    </source>
</reference>
<sequence length="203" mass="24203">MLDREGFRPNVGIILLNQRSEVFWGKRIRTHSWQFPQGGIKHGESPEQAMFRELHEEVGLFPDHVRIIARTRDWLRYEVPDHFIRRDARGHYKGQKQIWFLLQLTGRDSDMNLRATDHPEFDAWRWHDYWVPLEVVIEFKRNVYQMALTELARYVPRPNHHNRYLRSGMRAHRRDEGSEHNDHLDPTGPHDAGASVSEPKQAE</sequence>
<proteinExistence type="inferred from homology"/>
<organism>
    <name type="scientific">Leptothrix cholodnii (strain ATCC 51168 / LMG 8142 / SP-6)</name>
    <name type="common">Leptothrix discophora (strain SP-6)</name>
    <dbReference type="NCBI Taxonomy" id="395495"/>
    <lineage>
        <taxon>Bacteria</taxon>
        <taxon>Pseudomonadati</taxon>
        <taxon>Pseudomonadota</taxon>
        <taxon>Betaproteobacteria</taxon>
        <taxon>Burkholderiales</taxon>
        <taxon>Sphaerotilaceae</taxon>
        <taxon>Leptothrix</taxon>
    </lineage>
</organism>
<accession>B1XYW4</accession>
<keyword id="KW-0378">Hydrolase</keyword>
<keyword id="KW-1185">Reference proteome</keyword>
<feature type="chain" id="PRO_1000115284" description="RNA pyrophosphohydrolase">
    <location>
        <begin position="1"/>
        <end position="203"/>
    </location>
</feature>
<feature type="domain" description="Nudix hydrolase" evidence="1">
    <location>
        <begin position="6"/>
        <end position="149"/>
    </location>
</feature>
<feature type="region of interest" description="Disordered" evidence="2">
    <location>
        <begin position="170"/>
        <end position="203"/>
    </location>
</feature>
<feature type="short sequence motif" description="Nudix box">
    <location>
        <begin position="38"/>
        <end position="59"/>
    </location>
</feature>
<feature type="compositionally biased region" description="Basic and acidic residues" evidence="2">
    <location>
        <begin position="173"/>
        <end position="185"/>
    </location>
</feature>